<accession>A0A6G9KIR5</accession>
<comment type="function">
    <text evidence="1 3">Induces paralysis 5 minutes after injection into blowflies (L.caesar), and then death within 24 hours (PubMed:32182430). May have antimicrobial properties, like most ant linear peptides (By similarity).</text>
</comment>
<comment type="subcellular location">
    <subcellularLocation>
        <location evidence="3">Secreted</location>
    </subcellularLocation>
</comment>
<comment type="tissue specificity">
    <text evidence="3">Expressed by the venom gland.</text>
</comment>
<comment type="mass spectrometry" mass="2739.6" method="Electrospray" evidence="3"/>
<comment type="toxic dose">
    <text evidence="3">LD(50) is 75.45 +-2.3 nmol/g in blowfly (L.caesar) (at 24 hours post-injection).</text>
</comment>
<comment type="toxic dose">
    <text evidence="3">PD(50) is 69.16 +-8.6 nmol/g in blowfly (L.caesar) (at 1 hour post-injection).</text>
</comment>
<comment type="toxic dose">
    <text evidence="3">PD(50) is 74.67 +-21 nmol/g in blowfly (L.caesar) (at 24 hours post-injection).</text>
</comment>
<comment type="similarity">
    <text evidence="5">Belongs to the formicidae venom precursor-01 superfamily.</text>
</comment>
<reference evidence="7" key="1">
    <citation type="journal article" date="2020" name="J. Proteome Res.">
        <title>Venom Peptide Repertoire of the European Myrmicine Ant Manica rubida: Identification of Insecticidal Toxins.</title>
        <authorList>
            <person name="Touchard A."/>
            <person name="Aili S.R."/>
            <person name="Tene N."/>
            <person name="Barasse V."/>
            <person name="Klopp C."/>
            <person name="Dejean A."/>
            <person name="Kini R.M."/>
            <person name="Mrinalini X."/>
            <person name="Coquet L."/>
            <person name="Jouenne T."/>
            <person name="Lefranc B."/>
            <person name="Leprince J."/>
            <person name="Escoubas P."/>
            <person name="Nicholson G.M."/>
            <person name="Treilhou M."/>
            <person name="Bonnafe E."/>
        </authorList>
    </citation>
    <scope>NUCLEOTIDE SEQUENCE [MRNA]</scope>
    <scope>PROTEIN SEQUENCE OF 35-59</scope>
    <scope>FUNCTION</scope>
    <scope>SUBCELLULAR LOCATION</scope>
    <scope>TISSUE SPECIFICITY</scope>
    <scope>MASS SPECTROMETRY</scope>
    <scope>TOXIC DOSE</scope>
    <source>
        <tissue evidence="7">Venom gland</tissue>
    </source>
</reference>
<protein>
    <recommendedName>
        <fullName evidence="4">U20-myrmicitoxin-Mri1a</fullName>
        <shortName evidence="4">U20-MYRTX-Mri1a</shortName>
    </recommendedName>
</protein>
<proteinExistence type="evidence at protein level"/>
<evidence type="ECO:0000250" key="1">
    <source>
        <dbReference type="UniProtKB" id="P0DSJ5"/>
    </source>
</evidence>
<evidence type="ECO:0000255" key="2"/>
<evidence type="ECO:0000269" key="3">
    <source>
    </source>
</evidence>
<evidence type="ECO:0000303" key="4">
    <source>
    </source>
</evidence>
<evidence type="ECO:0000305" key="5"/>
<evidence type="ECO:0000305" key="6">
    <source>
    </source>
</evidence>
<evidence type="ECO:0000312" key="7">
    <source>
        <dbReference type="EMBL" id="QIQ51453.1"/>
    </source>
</evidence>
<organism evidence="7">
    <name type="scientific">Manica rubida</name>
    <name type="common">European giant red ant</name>
    <dbReference type="NCBI Taxonomy" id="219785"/>
    <lineage>
        <taxon>Eukaryota</taxon>
        <taxon>Metazoa</taxon>
        <taxon>Ecdysozoa</taxon>
        <taxon>Arthropoda</taxon>
        <taxon>Hexapoda</taxon>
        <taxon>Insecta</taxon>
        <taxon>Pterygota</taxon>
        <taxon>Neoptera</taxon>
        <taxon>Endopterygota</taxon>
        <taxon>Hymenoptera</taxon>
        <taxon>Apocrita</taxon>
        <taxon>Aculeata</taxon>
        <taxon>Formicoidea</taxon>
        <taxon>Formicidae</taxon>
        <taxon>Myrmicinae</taxon>
        <taxon>Manica</taxon>
    </lineage>
</organism>
<name>TX20A_MANRB</name>
<keyword id="KW-0929">Antimicrobial</keyword>
<keyword id="KW-0903">Direct protein sequencing</keyword>
<keyword id="KW-0964">Secreted</keyword>
<keyword id="KW-0732">Signal</keyword>
<keyword id="KW-0800">Toxin</keyword>
<feature type="signal peptide" evidence="2">
    <location>
        <begin position="1"/>
        <end position="24"/>
    </location>
</feature>
<feature type="propeptide" id="PRO_0000453053" evidence="6">
    <location>
        <begin position="25"/>
        <end position="34"/>
    </location>
</feature>
<feature type="peptide" id="PRO_0000453054" description="U20-myrmicitoxin-Mri1a" evidence="3">
    <location>
        <begin position="35"/>
        <end position="60"/>
    </location>
</feature>
<sequence length="60" mass="6276">MKSVILLFAVIAIIVAVIIPAINGESSSNPSANAGIMESLKQLSAKAEELIKKLLAKKAK</sequence>
<dbReference type="EMBL" id="MN765043">
    <property type="protein sequence ID" value="QIQ51453.1"/>
    <property type="molecule type" value="mRNA"/>
</dbReference>
<dbReference type="SMR" id="A0A6G9KIR5"/>
<dbReference type="GO" id="GO:0005576">
    <property type="term" value="C:extracellular region"/>
    <property type="evidence" value="ECO:0000314"/>
    <property type="project" value="UniProtKB"/>
</dbReference>
<dbReference type="GO" id="GO:0090729">
    <property type="term" value="F:toxin activity"/>
    <property type="evidence" value="ECO:0000314"/>
    <property type="project" value="UniProtKB"/>
</dbReference>
<dbReference type="GO" id="GO:0044616">
    <property type="term" value="P:venom-mediated paralysis in another organism"/>
    <property type="evidence" value="ECO:0000314"/>
    <property type="project" value="UniProtKB"/>
</dbReference>